<sequence length="48" mass="5337">GNCKCDDEGPNVRTAPLTGYVDLGYCNEGWEKCASYYSPIAECCRKKK</sequence>
<protein>
    <recommendedName>
        <fullName evidence="6">Delta-stichotoxin-Hmg4b</fullName>
        <shortName evidence="6">Delta-SHTX-Hmg4b</shortName>
    </recommendedName>
    <alternativeName>
        <fullName evidence="4">Delta-stichotoxin-Rpa1b</fullName>
        <shortName evidence="4">Delta-SHTX-Rpa1b</shortName>
    </alternativeName>
    <alternativeName>
        <fullName evidence="5">RpIII</fullName>
    </alternativeName>
    <alternativeName>
        <fullName>Toxin III</fullName>
    </alternativeName>
</protein>
<reference key="1">
    <citation type="journal article" date="1987" name="FEBS Lett.">
        <title>The amino acid sequence of toxin RpIII from the sea anemone, Radianthus paumotensis.</title>
        <authorList>
            <person name="Metrione R.M."/>
            <person name="Schweitz H."/>
            <person name="Walsh K.A."/>
        </authorList>
    </citation>
    <scope>PROTEIN SEQUENCE</scope>
    <scope>SUBCELLULAR LOCATION</scope>
    <source>
        <tissue>Nematoblast</tissue>
    </source>
</reference>
<reference key="2">
    <citation type="journal article" date="1985" name="Biochemistry">
        <title>Purification, sequence, and pharmacological properties of sea anemone toxins from Radianthus paumotensis. A new class of sea anemone toxins acting on the sodium channel.</title>
        <authorList>
            <person name="Schweitz H."/>
            <person name="Bidard J.-N."/>
            <person name="Frelin C."/>
            <person name="Pauron D."/>
            <person name="Vijverberg H.P.M."/>
            <person name="Mahasneh D.M."/>
            <person name="Lazdunski M."/>
            <person name="Vilbois F."/>
            <person name="Tsugita A."/>
        </authorList>
    </citation>
    <scope>FUNCTION</scope>
    <scope>TOXIC DOSE</scope>
</reference>
<reference key="3">
    <citation type="journal article" date="2012" name="Toxicon">
        <title>Development of a rational nomenclature for naming peptide and protein toxins from sea anemones.</title>
        <authorList>
            <person name="Oliveira J.S."/>
            <person name="Fuentes-Silva D."/>
            <person name="King G.F."/>
        </authorList>
    </citation>
    <scope>NOMENCLATURE</scope>
</reference>
<feature type="chain" id="PRO_0000221528" description="Delta-stichotoxin-Hmg4b" evidence="3">
    <location>
        <begin position="1"/>
        <end position="48"/>
    </location>
</feature>
<feature type="disulfide bond" evidence="1">
    <location>
        <begin position="3"/>
        <end position="43"/>
    </location>
</feature>
<feature type="disulfide bond" evidence="1">
    <location>
        <begin position="5"/>
        <end position="33"/>
    </location>
</feature>
<feature type="disulfide bond" evidence="1">
    <location>
        <begin position="26"/>
        <end position="44"/>
    </location>
</feature>
<evidence type="ECO:0000250" key="1">
    <source>
        <dbReference type="UniProtKB" id="P19651"/>
    </source>
</evidence>
<evidence type="ECO:0000269" key="2">
    <source>
    </source>
</evidence>
<evidence type="ECO:0000269" key="3">
    <source>
    </source>
</evidence>
<evidence type="ECO:0000303" key="4">
    <source>
    </source>
</evidence>
<evidence type="ECO:0000303" key="5">
    <source>
    </source>
</evidence>
<evidence type="ECO:0000305" key="6"/>
<proteinExistence type="evidence at protein level"/>
<comment type="function">
    <text evidence="2">Binds specifically to voltage-gated sodium channels (Nav), thereby delaying their inactivation during signal transduction (PubMed:2412579). Its toxicity is greater than that of RpII (AC P01534) (PubMed:2412579).</text>
</comment>
<comment type="subcellular location">
    <subcellularLocation>
        <location evidence="3">Secreted</location>
    </subcellularLocation>
    <subcellularLocation>
        <location>Nematocyst</location>
    </subcellularLocation>
</comment>
<comment type="toxic dose">
    <text evidence="2">LD(50) is 53 ug/kg when intraperitoneally injected into mice.</text>
</comment>
<comment type="toxic dose">
    <text evidence="2">LD(50) is 2.4 ug/kg when intracutaneously injected into mice.</text>
</comment>
<comment type="toxic dose">
    <text evidence="2">LD(50) is 10 ug/kg when on crabs.</text>
</comment>
<comment type="miscellaneous">
    <text>The C-terminal lysine was not positively identified.</text>
</comment>
<comment type="miscellaneous">
    <text evidence="6">A synonymy between H.magnifica and R.crispa is controversial.</text>
</comment>
<comment type="similarity">
    <text evidence="6">Belongs to the sea anemone sodium channel inhibitory toxin family. Type II subfamily.</text>
</comment>
<name>4BD_HETMG</name>
<keyword id="KW-0903">Direct protein sequencing</keyword>
<keyword id="KW-1015">Disulfide bond</keyword>
<keyword id="KW-0872">Ion channel impairing toxin</keyword>
<keyword id="KW-0166">Nematocyst</keyword>
<keyword id="KW-0528">Neurotoxin</keyword>
<keyword id="KW-0964">Secreted</keyword>
<keyword id="KW-0800">Toxin</keyword>
<keyword id="KW-0738">Voltage-gated sodium channel impairing toxin</keyword>
<organism>
    <name type="scientific">Heteractis magnifica</name>
    <name type="common">Magnificent sea anemone</name>
    <name type="synonym">Radianthus magnifica</name>
    <dbReference type="NCBI Taxonomy" id="38281"/>
    <lineage>
        <taxon>Eukaryota</taxon>
        <taxon>Metazoa</taxon>
        <taxon>Cnidaria</taxon>
        <taxon>Anthozoa</taxon>
        <taxon>Hexacorallia</taxon>
        <taxon>Actiniaria</taxon>
        <taxon>Stichodactylidae</taxon>
        <taxon>Heteractis</taxon>
    </lineage>
</organism>
<accession>P08380</accession>
<dbReference type="PIR" id="A25827">
    <property type="entry name" value="TZAZR3"/>
</dbReference>
<dbReference type="BMRB" id="P08380"/>
<dbReference type="SMR" id="P08380"/>
<dbReference type="GO" id="GO:0005576">
    <property type="term" value="C:extracellular region"/>
    <property type="evidence" value="ECO:0007669"/>
    <property type="project" value="UniProtKB-SubCell"/>
</dbReference>
<dbReference type="GO" id="GO:0042151">
    <property type="term" value="C:nematocyst"/>
    <property type="evidence" value="ECO:0007669"/>
    <property type="project" value="UniProtKB-SubCell"/>
</dbReference>
<dbReference type="GO" id="GO:0017080">
    <property type="term" value="F:sodium channel regulator activity"/>
    <property type="evidence" value="ECO:0007669"/>
    <property type="project" value="UniProtKB-KW"/>
</dbReference>
<dbReference type="GO" id="GO:0090729">
    <property type="term" value="F:toxin activity"/>
    <property type="evidence" value="ECO:0007669"/>
    <property type="project" value="UniProtKB-KW"/>
</dbReference>
<dbReference type="GO" id="GO:0009966">
    <property type="term" value="P:regulation of signal transduction"/>
    <property type="evidence" value="ECO:0007669"/>
    <property type="project" value="InterPro"/>
</dbReference>
<dbReference type="Gene3D" id="2.20.20.10">
    <property type="entry name" value="Anthopleurin-A"/>
    <property type="match status" value="1"/>
</dbReference>
<dbReference type="InterPro" id="IPR000693">
    <property type="entry name" value="Anenome_toxin"/>
</dbReference>
<dbReference type="InterPro" id="IPR023355">
    <property type="entry name" value="Myo_ane_neurotoxin_sf"/>
</dbReference>
<dbReference type="Pfam" id="PF00706">
    <property type="entry name" value="Toxin_4"/>
    <property type="match status" value="1"/>
</dbReference>
<dbReference type="PIRSF" id="PIRSF001905">
    <property type="entry name" value="Anenome_toxin"/>
    <property type="match status" value="1"/>
</dbReference>
<dbReference type="SUPFAM" id="SSF57392">
    <property type="entry name" value="Defensin-like"/>
    <property type="match status" value="1"/>
</dbReference>